<reference key="1">
    <citation type="submission" date="2007-08" db="EMBL/GenBank/DDBJ databases">
        <authorList>
            <consortium name="The Vibrio harveyi Genome Sequencing Project"/>
            <person name="Bassler B."/>
            <person name="Clifton S.W."/>
            <person name="Fulton L."/>
            <person name="Delehaunty K."/>
            <person name="Fronick C."/>
            <person name="Harrison M."/>
            <person name="Markivic C."/>
            <person name="Fulton R."/>
            <person name="Tin-Wollam A.-M."/>
            <person name="Shah N."/>
            <person name="Pepin K."/>
            <person name="Nash W."/>
            <person name="Thiruvilangam P."/>
            <person name="Bhonagiri V."/>
            <person name="Waters C."/>
            <person name="Tu K.C."/>
            <person name="Irgon J."/>
            <person name="Wilson R.K."/>
        </authorList>
    </citation>
    <scope>NUCLEOTIDE SEQUENCE [LARGE SCALE GENOMIC DNA]</scope>
    <source>
        <strain>ATCC BAA-1116 / BB120</strain>
    </source>
</reference>
<name>RECX_VIBC1</name>
<keyword id="KW-0963">Cytoplasm</keyword>
<gene>
    <name evidence="1" type="primary">recX</name>
    <name type="ordered locus">VIBHAR_03512</name>
</gene>
<evidence type="ECO:0000255" key="1">
    <source>
        <dbReference type="HAMAP-Rule" id="MF_01114"/>
    </source>
</evidence>
<comment type="function">
    <text evidence="1">Modulates RecA activity.</text>
</comment>
<comment type="subcellular location">
    <subcellularLocation>
        <location evidence="1">Cytoplasm</location>
    </subcellularLocation>
</comment>
<comment type="similarity">
    <text evidence="1">Belongs to the RecX family.</text>
</comment>
<organism>
    <name type="scientific">Vibrio campbellii (strain ATCC BAA-1116)</name>
    <dbReference type="NCBI Taxonomy" id="2902295"/>
    <lineage>
        <taxon>Bacteria</taxon>
        <taxon>Pseudomonadati</taxon>
        <taxon>Pseudomonadota</taxon>
        <taxon>Gammaproteobacteria</taxon>
        <taxon>Vibrionales</taxon>
        <taxon>Vibrionaceae</taxon>
        <taxon>Vibrio</taxon>
    </lineage>
</organism>
<sequence>MYQKLQAPTLSSKEAAIQLLSRRDHGQYELYQKLALKGYEEADIEAAINFCLDHNYLDDLRYAKSQVRQHVYKGHGERRIRQELKQKRVAESIIDMAMAEEPQDWFELARMAAEKKFKGIKAKDQKEYAKQVRFLQYRGYSFDQISYALSFEDED</sequence>
<protein>
    <recommendedName>
        <fullName evidence="1">Regulatory protein RecX</fullName>
    </recommendedName>
</protein>
<dbReference type="EMBL" id="CP000789">
    <property type="protein sequence ID" value="ABU72448.1"/>
    <property type="molecule type" value="Genomic_DNA"/>
</dbReference>
<dbReference type="RefSeq" id="WP_012128903.1">
    <property type="nucleotide sequence ID" value="NC_009783.1"/>
</dbReference>
<dbReference type="SMR" id="A7MYT6"/>
<dbReference type="KEGG" id="vha:VIBHAR_03512"/>
<dbReference type="PATRIC" id="fig|338187.25.peg.2698"/>
<dbReference type="Proteomes" id="UP000008152">
    <property type="component" value="Chromosome I"/>
</dbReference>
<dbReference type="GO" id="GO:0005737">
    <property type="term" value="C:cytoplasm"/>
    <property type="evidence" value="ECO:0007669"/>
    <property type="project" value="UniProtKB-SubCell"/>
</dbReference>
<dbReference type="GO" id="GO:0006282">
    <property type="term" value="P:regulation of DNA repair"/>
    <property type="evidence" value="ECO:0007669"/>
    <property type="project" value="UniProtKB-UniRule"/>
</dbReference>
<dbReference type="Gene3D" id="1.10.10.10">
    <property type="entry name" value="Winged helix-like DNA-binding domain superfamily/Winged helix DNA-binding domain"/>
    <property type="match status" value="3"/>
</dbReference>
<dbReference type="HAMAP" id="MF_01114">
    <property type="entry name" value="RecX"/>
    <property type="match status" value="1"/>
</dbReference>
<dbReference type="InterPro" id="IPR053926">
    <property type="entry name" value="RecX_HTH_1st"/>
</dbReference>
<dbReference type="InterPro" id="IPR053924">
    <property type="entry name" value="RecX_HTH_2nd"/>
</dbReference>
<dbReference type="InterPro" id="IPR053925">
    <property type="entry name" value="RecX_HTH_3rd"/>
</dbReference>
<dbReference type="InterPro" id="IPR003783">
    <property type="entry name" value="Regulatory_RecX"/>
</dbReference>
<dbReference type="InterPro" id="IPR036388">
    <property type="entry name" value="WH-like_DNA-bd_sf"/>
</dbReference>
<dbReference type="NCBIfam" id="NF001057">
    <property type="entry name" value="PRK00117.3-3"/>
    <property type="match status" value="1"/>
</dbReference>
<dbReference type="PANTHER" id="PTHR33602">
    <property type="entry name" value="REGULATORY PROTEIN RECX FAMILY PROTEIN"/>
    <property type="match status" value="1"/>
</dbReference>
<dbReference type="PANTHER" id="PTHR33602:SF1">
    <property type="entry name" value="REGULATORY PROTEIN RECX FAMILY PROTEIN"/>
    <property type="match status" value="1"/>
</dbReference>
<dbReference type="Pfam" id="PF21982">
    <property type="entry name" value="RecX_HTH1"/>
    <property type="match status" value="1"/>
</dbReference>
<dbReference type="Pfam" id="PF02631">
    <property type="entry name" value="RecX_HTH2"/>
    <property type="match status" value="1"/>
</dbReference>
<dbReference type="Pfam" id="PF21981">
    <property type="entry name" value="RecX_HTH3"/>
    <property type="match status" value="1"/>
</dbReference>
<feature type="chain" id="PRO_1000137204" description="Regulatory protein RecX">
    <location>
        <begin position="1"/>
        <end position="155"/>
    </location>
</feature>
<accession>A7MYT6</accession>
<proteinExistence type="inferred from homology"/>